<organism>
    <name type="scientific">Glycine max</name>
    <name type="common">Soybean</name>
    <name type="synonym">Glycine hispida</name>
    <dbReference type="NCBI Taxonomy" id="3847"/>
    <lineage>
        <taxon>Eukaryota</taxon>
        <taxon>Viridiplantae</taxon>
        <taxon>Streptophyta</taxon>
        <taxon>Embryophyta</taxon>
        <taxon>Tracheophyta</taxon>
        <taxon>Spermatophyta</taxon>
        <taxon>Magnoliopsida</taxon>
        <taxon>eudicotyledons</taxon>
        <taxon>Gunneridae</taxon>
        <taxon>Pentapetalae</taxon>
        <taxon>rosids</taxon>
        <taxon>fabids</taxon>
        <taxon>Fabales</taxon>
        <taxon>Fabaceae</taxon>
        <taxon>Papilionoideae</taxon>
        <taxon>50 kb inversion clade</taxon>
        <taxon>NPAAA clade</taxon>
        <taxon>indigoferoid/millettioid clade</taxon>
        <taxon>Phaseoleae</taxon>
        <taxon>Glycine</taxon>
        <taxon>Glycine subgen. Soja</taxon>
    </lineage>
</organism>
<proteinExistence type="evidence at transcript level"/>
<keyword id="KW-0963">Cytoplasm</keyword>
<keyword id="KW-1185">Reference proteome</keyword>
<keyword id="KW-0346">Stress response</keyword>
<gene>
    <name evidence="6" type="primary">NRP-B</name>
    <name evidence="8" type="ORF">GLYMA_05G218500</name>
</gene>
<evidence type="ECO:0000255" key="1">
    <source>
        <dbReference type="PROSITE-ProRule" id="PRU00569"/>
    </source>
</evidence>
<evidence type="ECO:0000256" key="2">
    <source>
        <dbReference type="SAM" id="MobiDB-lite"/>
    </source>
</evidence>
<evidence type="ECO:0000269" key="3">
    <source>
    </source>
</evidence>
<evidence type="ECO:0000269" key="4">
    <source>
    </source>
</evidence>
<evidence type="ECO:0000269" key="5">
    <source>
    </source>
</evidence>
<evidence type="ECO:0000303" key="6">
    <source>
    </source>
</evidence>
<evidence type="ECO:0000305" key="7"/>
<evidence type="ECO:0000312" key="8">
    <source>
        <dbReference type="EMBL" id="KRH60068.1"/>
    </source>
</evidence>
<accession>C6TAQ0</accession>
<feature type="chain" id="PRO_0000451107" description="DCD domain-containing protein NRP-B">
    <location>
        <begin position="1"/>
        <end position="330"/>
    </location>
</feature>
<feature type="domain" description="DCD" evidence="1">
    <location>
        <begin position="185"/>
        <end position="317"/>
    </location>
</feature>
<feature type="region of interest" description="Disordered" evidence="2">
    <location>
        <begin position="137"/>
        <end position="181"/>
    </location>
</feature>
<feature type="compositionally biased region" description="Basic and acidic residues" evidence="2">
    <location>
        <begin position="160"/>
        <end position="172"/>
    </location>
</feature>
<name>NRPB_SOYBN</name>
<reference key="1">
    <citation type="submission" date="2009-08" db="EMBL/GenBank/DDBJ databases">
        <authorList>
            <person name="Cheung F."/>
            <person name="Xiao Y."/>
            <person name="Chan A."/>
            <person name="Moskal W."/>
            <person name="Town C.D."/>
        </authorList>
    </citation>
    <scope>NUCLEOTIDE SEQUENCE [MRNA]</scope>
</reference>
<reference key="2">
    <citation type="journal article" date="2010" name="Nature">
        <title>Genome sequence of the palaeopolyploid soybean.</title>
        <authorList>
            <person name="Schmutz J."/>
            <person name="Cannon S.B."/>
            <person name="Schlueter J."/>
            <person name="Ma J."/>
            <person name="Mitros T."/>
            <person name="Nelson W."/>
            <person name="Hyten D.L."/>
            <person name="Song Q."/>
            <person name="Thelen J.J."/>
            <person name="Cheng J."/>
            <person name="Xu D."/>
            <person name="Hellsten U."/>
            <person name="May G.D."/>
            <person name="Yu Y."/>
            <person name="Sakurai T."/>
            <person name="Umezawa T."/>
            <person name="Bhattacharyya M.K."/>
            <person name="Sandhu D."/>
            <person name="Valliyodan B."/>
            <person name="Lindquist E."/>
            <person name="Peto M."/>
            <person name="Grant D."/>
            <person name="Shu S."/>
            <person name="Goodstein D."/>
            <person name="Barry K."/>
            <person name="Futrell-Griggs M."/>
            <person name="Abernathy B."/>
            <person name="Du J."/>
            <person name="Tian Z."/>
            <person name="Zhu L."/>
            <person name="Gill N."/>
            <person name="Joshi T."/>
            <person name="Libault M."/>
            <person name="Sethuraman A."/>
            <person name="Zhang X.-C."/>
            <person name="Shinozaki K."/>
            <person name="Nguyen H.T."/>
            <person name="Wing R.A."/>
            <person name="Cregan P."/>
            <person name="Specht J."/>
            <person name="Grimwood J."/>
            <person name="Rokhsar D."/>
            <person name="Stacey G."/>
            <person name="Shoemaker R.C."/>
            <person name="Jackson S.A."/>
        </authorList>
    </citation>
    <scope>NUCLEOTIDE SEQUENCE [LARGE SCALE GENOMIC DNA]</scope>
    <source>
        <strain>cv. Williams 82</strain>
    </source>
</reference>
<reference key="3">
    <citation type="journal article" date="2007" name="BMC Genomics">
        <title>Expression profiling on soybean leaves reveals integration of ER- and osmotic-stress pathways.</title>
        <authorList>
            <person name="Irsigler A.S."/>
            <person name="Costa M.D."/>
            <person name="Zhang P."/>
            <person name="Reis P.A."/>
            <person name="Dewey R.E."/>
            <person name="Boston R.S."/>
            <person name="Fontes E.P."/>
        </authorList>
    </citation>
    <scope>INDUCTION</scope>
</reference>
<reference key="4">
    <citation type="journal article" date="2008" name="J. Biol. Chem.">
        <title>A new branch of endoplasmic reticulum stress signaling and the osmotic signal converge on plant-specific asparagine-rich proteins to promote cell death.</title>
        <authorList>
            <person name="Costa M.D."/>
            <person name="Reis P.A."/>
            <person name="Valente M.A."/>
            <person name="Irsigler A.S."/>
            <person name="Carvalho C.M."/>
            <person name="Loureiro M.E."/>
            <person name="Aragao F.J."/>
            <person name="Boston R.S."/>
            <person name="Fietto L.G."/>
            <person name="Fontes E.P."/>
        </authorList>
    </citation>
    <scope>FUNCTION</scope>
    <scope>SUBCELLULAR LOCATION</scope>
    <scope>INDUCTION</scope>
</reference>
<reference key="5">
    <citation type="journal article" date="2011" name="J. Biol. Chem.">
        <title>A novel transcription factor, ERD15 (Early Responsive to Dehydration 15), connects endoplasmic reticulum stress with an osmotic stress-induced cell death signal.</title>
        <authorList>
            <person name="Alves M.S."/>
            <person name="Reis P.A."/>
            <person name="Dadalto S.P."/>
            <person name="Faria J.A."/>
            <person name="Fontes E.P."/>
            <person name="Fietto L.G."/>
        </authorList>
    </citation>
    <scope>INDUCTION</scope>
</reference>
<protein>
    <recommendedName>
        <fullName evidence="7">DCD domain-containing protein NRP-B</fullName>
    </recommendedName>
    <alternativeName>
        <fullName evidence="6">N-rich protein B</fullName>
    </alternativeName>
</protein>
<sequence length="330" mass="37104">MENNNQSFWQFSDQLRLQASNLANLSLNDSIWSNNYISKRRDERINFDIKVGGEINSFKSKDPACDYNDNVNGSLLAMPYNNNNNNNIILGFGGVGLNGGFNKGIYSKPAFANLNNNINLNINPKGHKGKVEDELFHPSKSSKKNNNLNKKHGDNNNNDNNKDSKAAGDKRFKTLPPSESLPRDETIGGYIFVCNNDTMAENLKRQLFGLPPRYRDSVRAITPGLPLFLYNYSTHQLHGIFEAASFGGTNIDPSAWEDKKCPGESRFPAQVRVITRKTCEPLEEDSFRPILHHYDGPKFRLELNVPEALSLLDIFAEQDTFNDAFEALPA</sequence>
<dbReference type="EMBL" id="BT094591">
    <property type="protein sequence ID" value="ACU18902.1"/>
    <property type="molecule type" value="mRNA"/>
</dbReference>
<dbReference type="EMBL" id="CM000838">
    <property type="protein sequence ID" value="KRH60068.1"/>
    <property type="molecule type" value="Genomic_DNA"/>
</dbReference>
<dbReference type="RefSeq" id="NP_001239779.1">
    <property type="nucleotide sequence ID" value="NM_001252850.3"/>
</dbReference>
<dbReference type="FunCoup" id="C6TAQ0">
    <property type="interactions" value="1955"/>
</dbReference>
<dbReference type="EnsemblPlants" id="KRH60068">
    <property type="protein sequence ID" value="KRH60068"/>
    <property type="gene ID" value="GLYMA_05G218500"/>
</dbReference>
<dbReference type="GeneID" id="100808989"/>
<dbReference type="Gramene" id="KRH60068">
    <property type="protein sequence ID" value="KRH60068"/>
    <property type="gene ID" value="GLYMA_05G218500"/>
</dbReference>
<dbReference type="KEGG" id="gmx:100808989"/>
<dbReference type="HOGENOM" id="CLU_051751_0_0_1"/>
<dbReference type="InParanoid" id="C6TAQ0"/>
<dbReference type="OMA" id="GFNDGWN"/>
<dbReference type="OrthoDB" id="1908866at2759"/>
<dbReference type="Proteomes" id="UP000008827">
    <property type="component" value="Chromosome 5"/>
</dbReference>
<dbReference type="ExpressionAtlas" id="C6TAQ0">
    <property type="expression patterns" value="baseline and differential"/>
</dbReference>
<dbReference type="GO" id="GO:0005737">
    <property type="term" value="C:cytoplasm"/>
    <property type="evidence" value="ECO:0000314"/>
    <property type="project" value="UniProtKB"/>
</dbReference>
<dbReference type="GO" id="GO:0034976">
    <property type="term" value="P:response to endoplasmic reticulum stress"/>
    <property type="evidence" value="ECO:0000315"/>
    <property type="project" value="UniProtKB"/>
</dbReference>
<dbReference type="GO" id="GO:0009414">
    <property type="term" value="P:response to water deprivation"/>
    <property type="evidence" value="ECO:0000315"/>
    <property type="project" value="UniProtKB"/>
</dbReference>
<dbReference type="InterPro" id="IPR013989">
    <property type="entry name" value="Dev_and_cell_death_domain"/>
</dbReference>
<dbReference type="InterPro" id="IPR044832">
    <property type="entry name" value="NRP-like"/>
</dbReference>
<dbReference type="PANTHER" id="PTHR46034">
    <property type="match status" value="1"/>
</dbReference>
<dbReference type="PANTHER" id="PTHR46034:SF32">
    <property type="entry name" value="DCD DOMAIN-CONTAINING PROTEIN NRP-B"/>
    <property type="match status" value="1"/>
</dbReference>
<dbReference type="Pfam" id="PF10539">
    <property type="entry name" value="Dev_Cell_Death"/>
    <property type="match status" value="1"/>
</dbReference>
<dbReference type="SMART" id="SM00767">
    <property type="entry name" value="DCD"/>
    <property type="match status" value="1"/>
</dbReference>
<dbReference type="PROSITE" id="PS51222">
    <property type="entry name" value="DCD"/>
    <property type="match status" value="1"/>
</dbReference>
<comment type="function">
    <text evidence="4">Involved in stress signaling pathway that mediates cell death in response to endoplasmic reticulum (ER) stress and osmotic stress.</text>
</comment>
<comment type="subcellular location">
    <subcellularLocation>
        <location evidence="4">Cytoplasm</location>
    </subcellularLocation>
</comment>
<comment type="induction">
    <text evidence="3 4 5">Induced by tunicamycin, azetidine-2-carboxylate (AZC) and osmotic stress (PubMed:18036212, PubMed:18490446). Induced by dithiothreitol (DTT) (PubMed:18490446). Induced by wounding (PubMed:21482825).</text>
</comment>
<comment type="miscellaneous">
    <text evidence="4">Over expression of NRP in protoplasts induces caspase-3-like activity and promotes extensive DNA fragmentation (PubMed:18490446). Transient expression of NRP in planta causes leaf yellowing, chlorophyll loss, malondialdehyde production, ethylene accumulation, and induction of the senescence marker gene CP1 (PubMed:18490446).</text>
</comment>